<evidence type="ECO:0000255" key="1">
    <source>
        <dbReference type="HAMAP-Rule" id="MF_00242"/>
    </source>
</evidence>
<keyword id="KW-0056">Arginine metabolism</keyword>
<keyword id="KW-0963">Cytoplasm</keyword>
<keyword id="KW-0378">Hydrolase</keyword>
<keyword id="KW-1185">Reference proteome</keyword>
<accession>Q7NRJ9</accession>
<protein>
    <recommendedName>
        <fullName evidence="1">Arginine deiminase</fullName>
        <shortName evidence="1">ADI</shortName>
        <ecNumber evidence="1">3.5.3.6</ecNumber>
    </recommendedName>
    <alternativeName>
        <fullName evidence="1">Arginine dihydrolase</fullName>
        <shortName evidence="1">AD</shortName>
    </alternativeName>
</protein>
<feature type="chain" id="PRO_0000182208" description="Arginine deiminase">
    <location>
        <begin position="1"/>
        <end position="410"/>
    </location>
</feature>
<feature type="active site" description="Amidino-cysteine intermediate" evidence="1">
    <location>
        <position position="398"/>
    </location>
</feature>
<dbReference type="EC" id="3.5.3.6" evidence="1"/>
<dbReference type="EMBL" id="AE016825">
    <property type="protein sequence ID" value="AAQ61444.1"/>
    <property type="molecule type" value="Genomic_DNA"/>
</dbReference>
<dbReference type="RefSeq" id="WP_011137329.1">
    <property type="nucleotide sequence ID" value="NC_005085.1"/>
</dbReference>
<dbReference type="SMR" id="Q7NRJ9"/>
<dbReference type="STRING" id="243365.CV_3782"/>
<dbReference type="GeneID" id="66365014"/>
<dbReference type="KEGG" id="cvi:CV_3782"/>
<dbReference type="eggNOG" id="COG2235">
    <property type="taxonomic scope" value="Bacteria"/>
</dbReference>
<dbReference type="HOGENOM" id="CLU_052662_0_0_4"/>
<dbReference type="OrthoDB" id="9807502at2"/>
<dbReference type="UniPathway" id="UPA00254">
    <property type="reaction ID" value="UER00364"/>
</dbReference>
<dbReference type="Proteomes" id="UP000001424">
    <property type="component" value="Chromosome"/>
</dbReference>
<dbReference type="GO" id="GO:0005737">
    <property type="term" value="C:cytoplasm"/>
    <property type="evidence" value="ECO:0007669"/>
    <property type="project" value="UniProtKB-SubCell"/>
</dbReference>
<dbReference type="GO" id="GO:0016990">
    <property type="term" value="F:arginine deiminase activity"/>
    <property type="evidence" value="ECO:0007669"/>
    <property type="project" value="UniProtKB-UniRule"/>
</dbReference>
<dbReference type="GO" id="GO:0019547">
    <property type="term" value="P:arginine catabolic process to ornithine"/>
    <property type="evidence" value="ECO:0007669"/>
    <property type="project" value="UniProtKB-UniRule"/>
</dbReference>
<dbReference type="GO" id="GO:0019546">
    <property type="term" value="P:arginine deiminase pathway"/>
    <property type="evidence" value="ECO:0007669"/>
    <property type="project" value="TreeGrafter"/>
</dbReference>
<dbReference type="Gene3D" id="1.10.3930.10">
    <property type="entry name" value="Arginine deiminase"/>
    <property type="match status" value="1"/>
</dbReference>
<dbReference type="Gene3D" id="3.75.10.10">
    <property type="entry name" value="L-arginine/glycine Amidinotransferase, Chain A"/>
    <property type="match status" value="1"/>
</dbReference>
<dbReference type="HAMAP" id="MF_00242">
    <property type="entry name" value="Arg_deiminase"/>
    <property type="match status" value="1"/>
</dbReference>
<dbReference type="InterPro" id="IPR003876">
    <property type="entry name" value="Arg_deiminase"/>
</dbReference>
<dbReference type="NCBIfam" id="NF002381">
    <property type="entry name" value="PRK01388.1"/>
    <property type="match status" value="1"/>
</dbReference>
<dbReference type="PANTHER" id="PTHR47271">
    <property type="entry name" value="ARGININE DEIMINASE"/>
    <property type="match status" value="1"/>
</dbReference>
<dbReference type="PANTHER" id="PTHR47271:SF3">
    <property type="entry name" value="ARGININE DEIMINASE"/>
    <property type="match status" value="1"/>
</dbReference>
<dbReference type="Pfam" id="PF02274">
    <property type="entry name" value="ADI"/>
    <property type="match status" value="1"/>
</dbReference>
<dbReference type="PIRSF" id="PIRSF006356">
    <property type="entry name" value="Arg_deiminase"/>
    <property type="match status" value="1"/>
</dbReference>
<dbReference type="PRINTS" id="PR01466">
    <property type="entry name" value="ARGDEIMINASE"/>
</dbReference>
<dbReference type="SUPFAM" id="SSF55909">
    <property type="entry name" value="Pentein"/>
    <property type="match status" value="1"/>
</dbReference>
<proteinExistence type="inferred from homology"/>
<sequence>MTKFGVHSECGKLRTVMVCRPGLAHKRLTPDNCHDLLFDDVIWVERAQKDHAYMVEQMRARGIEVIEVHDALAKVLDDKAARNWILDRKVKADNVGIGMLSDLRSWLNEMPSSQLADHLVGGIAKFELPFDPKGLFGGYLDRSDFVLPPIPNSLFQRDPSCWIYEGVTLNPMYWPARRQETLILQSIYQFHPYFAGKVNIWWGGCDTDHGPATLEGGDVMPIGNGVVLIGMGERTSPQAVVQVAKRVLHREGGAKRVIACQMPKSRAAMHLDTVFSFLDIDLLSVFPDVVDEITCTSMYAGDREGEIRFERHEGVKLVDVVREALNLKEIRVIQTGGDAYQREREQWDDGNNVVALDRRVVVAYDRNTYTNRLMREHGVEVIEIPASELGRGRGGGHCMTCPIIRDEVKV</sequence>
<name>ARCA_CHRVO</name>
<reference key="1">
    <citation type="journal article" date="2003" name="Proc. Natl. Acad. Sci. U.S.A.">
        <title>The complete genome sequence of Chromobacterium violaceum reveals remarkable and exploitable bacterial adaptability.</title>
        <authorList>
            <person name="Vasconcelos A.T.R."/>
            <person name="de Almeida D.F."/>
            <person name="Hungria M."/>
            <person name="Guimaraes C.T."/>
            <person name="Antonio R.V."/>
            <person name="Almeida F.C."/>
            <person name="de Almeida L.G.P."/>
            <person name="de Almeida R."/>
            <person name="Alves-Gomes J.A."/>
            <person name="Andrade E.M."/>
            <person name="Araripe J."/>
            <person name="de Araujo M.F.F."/>
            <person name="Astolfi-Filho S."/>
            <person name="Azevedo V."/>
            <person name="Baptista A.J."/>
            <person name="Bataus L.A.M."/>
            <person name="Batista J.S."/>
            <person name="Belo A."/>
            <person name="van den Berg C."/>
            <person name="Bogo M."/>
            <person name="Bonatto S."/>
            <person name="Bordignon J."/>
            <person name="Brigido M.M."/>
            <person name="Brito C.A."/>
            <person name="Brocchi M."/>
            <person name="Burity H.A."/>
            <person name="Camargo A.A."/>
            <person name="Cardoso D.D.P."/>
            <person name="Carneiro N.P."/>
            <person name="Carraro D.M."/>
            <person name="Carvalho C.M.B."/>
            <person name="Cascardo J.C.M."/>
            <person name="Cavada B.S."/>
            <person name="Chueire L.M.O."/>
            <person name="Creczynski-Pasa T.B."/>
            <person name="Cunha-Junior N.C."/>
            <person name="Fagundes N."/>
            <person name="Falcao C.L."/>
            <person name="Fantinatti F."/>
            <person name="Farias I.P."/>
            <person name="Felipe M.S.S."/>
            <person name="Ferrari L.P."/>
            <person name="Ferro J.A."/>
            <person name="Ferro M.I.T."/>
            <person name="Franco G.R."/>
            <person name="Freitas N.S.A."/>
            <person name="Furlan L.R."/>
            <person name="Gazzinelli R.T."/>
            <person name="Gomes E.A."/>
            <person name="Goncalves P.R."/>
            <person name="Grangeiro T.B."/>
            <person name="Grattapaglia D."/>
            <person name="Grisard E.C."/>
            <person name="Hanna E.S."/>
            <person name="Jardim S.N."/>
            <person name="Laurino J."/>
            <person name="Leoi L.C.T."/>
            <person name="Lima L.F.A."/>
            <person name="Loureiro M.F."/>
            <person name="Lyra M.C.C.P."/>
            <person name="Madeira H.M.F."/>
            <person name="Manfio G.P."/>
            <person name="Maranhao A.Q."/>
            <person name="Martins W.S."/>
            <person name="di Mauro S.M.Z."/>
            <person name="de Medeiros S.R.B."/>
            <person name="Meissner R.V."/>
            <person name="Moreira M.A.M."/>
            <person name="Nascimento F.F."/>
            <person name="Nicolas M.F."/>
            <person name="Oliveira J.G."/>
            <person name="Oliveira S.C."/>
            <person name="Paixao R.F.C."/>
            <person name="Parente J.A."/>
            <person name="Pedrosa F.O."/>
            <person name="Pena S.D.J."/>
            <person name="Pereira J.O."/>
            <person name="Pereira M."/>
            <person name="Pinto L.S.R.C."/>
            <person name="Pinto L.S."/>
            <person name="Porto J.I.R."/>
            <person name="Potrich D.P."/>
            <person name="Ramalho-Neto C.E."/>
            <person name="Reis A.M.M."/>
            <person name="Rigo L.U."/>
            <person name="Rondinelli E."/>
            <person name="Santos E.B.P."/>
            <person name="Santos F.R."/>
            <person name="Schneider M.P.C."/>
            <person name="Seuanez H.N."/>
            <person name="Silva A.M.R."/>
            <person name="da Silva A.L.C."/>
            <person name="Silva D.W."/>
            <person name="Silva R."/>
            <person name="Simoes I.C."/>
            <person name="Simon D."/>
            <person name="Soares C.M.A."/>
            <person name="Soares R.B.A."/>
            <person name="Souza E.M."/>
            <person name="Souza K.R.L."/>
            <person name="Souza R.C."/>
            <person name="Steffens M.B.R."/>
            <person name="Steindel M."/>
            <person name="Teixeira S.R."/>
            <person name="Urmenyi T."/>
            <person name="Vettore A."/>
            <person name="Wassem R."/>
            <person name="Zaha A."/>
            <person name="Simpson A.J.G."/>
        </authorList>
    </citation>
    <scope>NUCLEOTIDE SEQUENCE [LARGE SCALE GENOMIC DNA]</scope>
    <source>
        <strain>ATCC 12472 / DSM 30191 / JCM 1249 / CCUG 213 / NBRC 12614 / NCIMB 9131 / NCTC 9757 / MK</strain>
    </source>
</reference>
<gene>
    <name evidence="1" type="primary">arcA</name>
    <name type="ordered locus">CV_3782</name>
</gene>
<comment type="catalytic activity">
    <reaction evidence="1">
        <text>L-arginine + H2O = L-citrulline + NH4(+)</text>
        <dbReference type="Rhea" id="RHEA:19597"/>
        <dbReference type="ChEBI" id="CHEBI:15377"/>
        <dbReference type="ChEBI" id="CHEBI:28938"/>
        <dbReference type="ChEBI" id="CHEBI:32682"/>
        <dbReference type="ChEBI" id="CHEBI:57743"/>
        <dbReference type="EC" id="3.5.3.6"/>
    </reaction>
</comment>
<comment type="pathway">
    <text evidence="1">Amino-acid degradation; L-arginine degradation via ADI pathway; carbamoyl phosphate from L-arginine: step 1/2.</text>
</comment>
<comment type="subcellular location">
    <subcellularLocation>
        <location evidence="1">Cytoplasm</location>
    </subcellularLocation>
</comment>
<comment type="similarity">
    <text evidence="1">Belongs to the arginine deiminase family.</text>
</comment>
<organism>
    <name type="scientific">Chromobacterium violaceum (strain ATCC 12472 / DSM 30191 / JCM 1249 / CCUG 213 / NBRC 12614 / NCIMB 9131 / NCTC 9757 / MK)</name>
    <dbReference type="NCBI Taxonomy" id="243365"/>
    <lineage>
        <taxon>Bacteria</taxon>
        <taxon>Pseudomonadati</taxon>
        <taxon>Pseudomonadota</taxon>
        <taxon>Betaproteobacteria</taxon>
        <taxon>Neisseriales</taxon>
        <taxon>Chromobacteriaceae</taxon>
        <taxon>Chromobacterium</taxon>
    </lineage>
</organism>